<evidence type="ECO:0000255" key="1">
    <source>
        <dbReference type="HAMAP-Rule" id="MF_00150"/>
    </source>
</evidence>
<organism>
    <name type="scientific">Salinispora arenicola (strain CNS-205)</name>
    <dbReference type="NCBI Taxonomy" id="391037"/>
    <lineage>
        <taxon>Bacteria</taxon>
        <taxon>Bacillati</taxon>
        <taxon>Actinomycetota</taxon>
        <taxon>Actinomycetes</taxon>
        <taxon>Micromonosporales</taxon>
        <taxon>Micromonosporaceae</taxon>
        <taxon>Salinispora</taxon>
    </lineage>
</organism>
<protein>
    <recommendedName>
        <fullName evidence="1">N-acetyl-gamma-glutamyl-phosphate reductase</fullName>
        <shortName evidence="1">AGPR</shortName>
        <ecNumber evidence="1">1.2.1.38</ecNumber>
    </recommendedName>
    <alternativeName>
        <fullName evidence="1">N-acetyl-glutamate semialdehyde dehydrogenase</fullName>
        <shortName evidence="1">NAGSA dehydrogenase</shortName>
    </alternativeName>
</protein>
<accession>A8LY49</accession>
<gene>
    <name evidence="1" type="primary">argC</name>
    <name type="ordered locus">Sare_1881</name>
</gene>
<proteinExistence type="inferred from homology"/>
<dbReference type="EC" id="1.2.1.38" evidence="1"/>
<dbReference type="EMBL" id="CP000850">
    <property type="protein sequence ID" value="ABV97766.1"/>
    <property type="molecule type" value="Genomic_DNA"/>
</dbReference>
<dbReference type="SMR" id="A8LY49"/>
<dbReference type="STRING" id="391037.Sare_1881"/>
<dbReference type="KEGG" id="saq:Sare_1881"/>
<dbReference type="PATRIC" id="fig|391037.6.peg.1909"/>
<dbReference type="eggNOG" id="COG0002">
    <property type="taxonomic scope" value="Bacteria"/>
</dbReference>
<dbReference type="HOGENOM" id="CLU_006384_0_0_11"/>
<dbReference type="OrthoDB" id="9801289at2"/>
<dbReference type="UniPathway" id="UPA00068">
    <property type="reaction ID" value="UER00108"/>
</dbReference>
<dbReference type="GO" id="GO:0005737">
    <property type="term" value="C:cytoplasm"/>
    <property type="evidence" value="ECO:0007669"/>
    <property type="project" value="UniProtKB-SubCell"/>
</dbReference>
<dbReference type="GO" id="GO:0003942">
    <property type="term" value="F:N-acetyl-gamma-glutamyl-phosphate reductase activity"/>
    <property type="evidence" value="ECO:0007669"/>
    <property type="project" value="UniProtKB-UniRule"/>
</dbReference>
<dbReference type="GO" id="GO:0051287">
    <property type="term" value="F:NAD binding"/>
    <property type="evidence" value="ECO:0007669"/>
    <property type="project" value="InterPro"/>
</dbReference>
<dbReference type="GO" id="GO:0070401">
    <property type="term" value="F:NADP+ binding"/>
    <property type="evidence" value="ECO:0007669"/>
    <property type="project" value="InterPro"/>
</dbReference>
<dbReference type="GO" id="GO:0006526">
    <property type="term" value="P:L-arginine biosynthetic process"/>
    <property type="evidence" value="ECO:0007669"/>
    <property type="project" value="UniProtKB-UniRule"/>
</dbReference>
<dbReference type="CDD" id="cd24148">
    <property type="entry name" value="AGPR_1_actinobacAGPR_like"/>
    <property type="match status" value="1"/>
</dbReference>
<dbReference type="CDD" id="cd23934">
    <property type="entry name" value="AGPR_1_C"/>
    <property type="match status" value="1"/>
</dbReference>
<dbReference type="Gene3D" id="3.30.360.10">
    <property type="entry name" value="Dihydrodipicolinate Reductase, domain 2"/>
    <property type="match status" value="1"/>
</dbReference>
<dbReference type="Gene3D" id="3.40.50.720">
    <property type="entry name" value="NAD(P)-binding Rossmann-like Domain"/>
    <property type="match status" value="1"/>
</dbReference>
<dbReference type="HAMAP" id="MF_00150">
    <property type="entry name" value="ArgC_type1"/>
    <property type="match status" value="1"/>
</dbReference>
<dbReference type="InterPro" id="IPR023013">
    <property type="entry name" value="AGPR_AS"/>
</dbReference>
<dbReference type="InterPro" id="IPR000706">
    <property type="entry name" value="AGPR_type-1"/>
</dbReference>
<dbReference type="InterPro" id="IPR036291">
    <property type="entry name" value="NAD(P)-bd_dom_sf"/>
</dbReference>
<dbReference type="InterPro" id="IPR050085">
    <property type="entry name" value="NAGSA_dehydrogenase"/>
</dbReference>
<dbReference type="InterPro" id="IPR000534">
    <property type="entry name" value="Semialdehyde_DH_NAD-bd"/>
</dbReference>
<dbReference type="NCBIfam" id="TIGR01850">
    <property type="entry name" value="argC"/>
    <property type="match status" value="1"/>
</dbReference>
<dbReference type="PANTHER" id="PTHR32338:SF10">
    <property type="entry name" value="N-ACETYL-GAMMA-GLUTAMYL-PHOSPHATE REDUCTASE, CHLOROPLASTIC-RELATED"/>
    <property type="match status" value="1"/>
</dbReference>
<dbReference type="PANTHER" id="PTHR32338">
    <property type="entry name" value="N-ACETYL-GAMMA-GLUTAMYL-PHOSPHATE REDUCTASE, CHLOROPLASTIC-RELATED-RELATED"/>
    <property type="match status" value="1"/>
</dbReference>
<dbReference type="Pfam" id="PF01118">
    <property type="entry name" value="Semialdhyde_dh"/>
    <property type="match status" value="1"/>
</dbReference>
<dbReference type="Pfam" id="PF22698">
    <property type="entry name" value="Semialdhyde_dhC_1"/>
    <property type="match status" value="1"/>
</dbReference>
<dbReference type="SMART" id="SM00859">
    <property type="entry name" value="Semialdhyde_dh"/>
    <property type="match status" value="1"/>
</dbReference>
<dbReference type="SUPFAM" id="SSF55347">
    <property type="entry name" value="Glyceraldehyde-3-phosphate dehydrogenase-like, C-terminal domain"/>
    <property type="match status" value="1"/>
</dbReference>
<dbReference type="SUPFAM" id="SSF51735">
    <property type="entry name" value="NAD(P)-binding Rossmann-fold domains"/>
    <property type="match status" value="1"/>
</dbReference>
<dbReference type="PROSITE" id="PS01224">
    <property type="entry name" value="ARGC"/>
    <property type="match status" value="1"/>
</dbReference>
<keyword id="KW-0028">Amino-acid biosynthesis</keyword>
<keyword id="KW-0055">Arginine biosynthesis</keyword>
<keyword id="KW-0963">Cytoplasm</keyword>
<keyword id="KW-0521">NADP</keyword>
<keyword id="KW-0560">Oxidoreductase</keyword>
<name>ARGC_SALAI</name>
<feature type="chain" id="PRO_1000076741" description="N-acetyl-gamma-glutamyl-phosphate reductase">
    <location>
        <begin position="1"/>
        <end position="333"/>
    </location>
</feature>
<feature type="active site" evidence="1">
    <location>
        <position position="145"/>
    </location>
</feature>
<reference key="1">
    <citation type="submission" date="2007-10" db="EMBL/GenBank/DDBJ databases">
        <title>Complete sequence of Salinispora arenicola CNS-205.</title>
        <authorList>
            <consortium name="US DOE Joint Genome Institute"/>
            <person name="Copeland A."/>
            <person name="Lucas S."/>
            <person name="Lapidus A."/>
            <person name="Barry K."/>
            <person name="Glavina del Rio T."/>
            <person name="Dalin E."/>
            <person name="Tice H."/>
            <person name="Pitluck S."/>
            <person name="Foster B."/>
            <person name="Schmutz J."/>
            <person name="Larimer F."/>
            <person name="Land M."/>
            <person name="Hauser L."/>
            <person name="Kyrpides N."/>
            <person name="Ivanova N."/>
            <person name="Jensen P.R."/>
            <person name="Moore B.S."/>
            <person name="Penn K."/>
            <person name="Jenkins C."/>
            <person name="Udwary D."/>
            <person name="Xiang L."/>
            <person name="Gontang E."/>
            <person name="Richardson P."/>
        </authorList>
    </citation>
    <scope>NUCLEOTIDE SEQUENCE [LARGE SCALE GENOMIC DNA]</scope>
    <source>
        <strain>CNS-205</strain>
    </source>
</reference>
<comment type="function">
    <text evidence="1">Catalyzes the NADPH-dependent reduction of N-acetyl-5-glutamyl phosphate to yield N-acetyl-L-glutamate 5-semialdehyde.</text>
</comment>
<comment type="catalytic activity">
    <reaction evidence="1">
        <text>N-acetyl-L-glutamate 5-semialdehyde + phosphate + NADP(+) = N-acetyl-L-glutamyl 5-phosphate + NADPH + H(+)</text>
        <dbReference type="Rhea" id="RHEA:21588"/>
        <dbReference type="ChEBI" id="CHEBI:15378"/>
        <dbReference type="ChEBI" id="CHEBI:29123"/>
        <dbReference type="ChEBI" id="CHEBI:43474"/>
        <dbReference type="ChEBI" id="CHEBI:57783"/>
        <dbReference type="ChEBI" id="CHEBI:57936"/>
        <dbReference type="ChEBI" id="CHEBI:58349"/>
        <dbReference type="EC" id="1.2.1.38"/>
    </reaction>
</comment>
<comment type="pathway">
    <text evidence="1">Amino-acid biosynthesis; L-arginine biosynthesis; N(2)-acetyl-L-ornithine from L-glutamate: step 3/4.</text>
</comment>
<comment type="subcellular location">
    <subcellularLocation>
        <location evidence="1">Cytoplasm</location>
    </subcellularLocation>
</comment>
<comment type="similarity">
    <text evidence="1">Belongs to the NAGSA dehydrogenase family. Type 1 subfamily.</text>
</comment>
<sequence length="333" mass="33914">MGIRVAVVGASGYAGGELLRLVAGHPEFELVTATAHSQAGHRLHTVHPQLIGLDLVLAETDPAALADADLVFLALPHGESAALAAQLPPKTRVVDLGADHRLADPYAWANYYGGTHAGQWTYGLSELPGQRERVAAATRVANPGCYATAIILALAPLIAAGAAQPADVVVVAASGVSGAGRAAKAHLLAGEVMGDLSPYRVGAHQHVPEIKQATGATSLSFTPVLAPMPRGILATVTAVPARGVDPQAVLAEAYADAPFVHVLPEGRWPHTAATLGSNSCHLQATVDVDAGRLIVVSGLDNLGRGAAGQAVQNANIMVGLPETTGLSAWGVTP</sequence>